<reference key="1">
    <citation type="journal article" date="2002" name="J. Biochem.">
        <title>Isolation and characterization of the dcw cluster from the piezophilic deep-sea bacterium Shewanella violacea.</title>
        <authorList>
            <person name="Ishii A."/>
            <person name="Nakasone K."/>
            <person name="Sato T."/>
            <person name="Wachi M."/>
            <person name="Sugai M."/>
            <person name="Nagai K."/>
            <person name="Kato C."/>
        </authorList>
    </citation>
    <scope>NUCLEOTIDE SEQUENCE [GENOMIC DNA]</scope>
</reference>
<reference key="2">
    <citation type="journal article" date="2010" name="Mol. Biosyst.">
        <title>Complete genome sequence and comparative analysis of Shewanella violacea, a psychrophilic and piezophilic bacterium from deep sea floor sediments.</title>
        <authorList>
            <person name="Aono E."/>
            <person name="Baba T."/>
            <person name="Ara T."/>
            <person name="Nishi T."/>
            <person name="Nakamichi T."/>
            <person name="Inamoto E."/>
            <person name="Toyonaga H."/>
            <person name="Hasegawa M."/>
            <person name="Takai Y."/>
            <person name="Okumura Y."/>
            <person name="Baba M."/>
            <person name="Tomita M."/>
            <person name="Kato C."/>
            <person name="Oshima T."/>
            <person name="Nakasone K."/>
            <person name="Mori H."/>
        </authorList>
    </citation>
    <scope>NUCLEOTIDE SEQUENCE [LARGE SCALE GENOMIC DNA]</scope>
    <source>
        <strain>JCM 10179 / CIP 106290 / LMG 19151 / DSS12</strain>
    </source>
</reference>
<protein>
    <recommendedName>
        <fullName evidence="1">UDP-3-O-acyl-N-acetylglucosamine deacetylase</fullName>
        <shortName evidence="1">UDP-3-O-acyl-GlcNAc deacetylase</shortName>
        <ecNumber evidence="1">3.5.1.108</ecNumber>
    </recommendedName>
    <alternativeName>
        <fullName evidence="1">UDP-3-O-[R-3-hydroxymyristoyl]-N-acetylglucosamine deacetylase</fullName>
    </alternativeName>
</protein>
<organism>
    <name type="scientific">Shewanella violacea (strain JCM 10179 / CIP 106290 / LMG 19151 / DSS12)</name>
    <dbReference type="NCBI Taxonomy" id="637905"/>
    <lineage>
        <taxon>Bacteria</taxon>
        <taxon>Pseudomonadati</taxon>
        <taxon>Pseudomonadota</taxon>
        <taxon>Gammaproteobacteria</taxon>
        <taxon>Alteromonadales</taxon>
        <taxon>Shewanellaceae</taxon>
        <taxon>Shewanella</taxon>
    </lineage>
</organism>
<comment type="function">
    <text evidence="1">Catalyzes the hydrolysis of UDP-3-O-myristoyl-N-acetylglucosamine to form UDP-3-O-myristoylglucosamine and acetate, the committed step in lipid A biosynthesis.</text>
</comment>
<comment type="catalytic activity">
    <reaction evidence="1">
        <text>a UDP-3-O-[(3R)-3-hydroxyacyl]-N-acetyl-alpha-D-glucosamine + H2O = a UDP-3-O-[(3R)-3-hydroxyacyl]-alpha-D-glucosamine + acetate</text>
        <dbReference type="Rhea" id="RHEA:67816"/>
        <dbReference type="ChEBI" id="CHEBI:15377"/>
        <dbReference type="ChEBI" id="CHEBI:30089"/>
        <dbReference type="ChEBI" id="CHEBI:137740"/>
        <dbReference type="ChEBI" id="CHEBI:173225"/>
        <dbReference type="EC" id="3.5.1.108"/>
    </reaction>
</comment>
<comment type="cofactor">
    <cofactor evidence="1">
        <name>Zn(2+)</name>
        <dbReference type="ChEBI" id="CHEBI:29105"/>
    </cofactor>
</comment>
<comment type="pathway">
    <text evidence="1">Glycolipid biosynthesis; lipid IV(A) biosynthesis; lipid IV(A) from (3R)-3-hydroxytetradecanoyl-[acyl-carrier-protein] and UDP-N-acetyl-alpha-D-glucosamine: step 2/6.</text>
</comment>
<comment type="similarity">
    <text evidence="1">Belongs to the LpxC family.</text>
</comment>
<proteinExistence type="inferred from homology"/>
<accession>Q9EV47</accession>
<accession>D4ZDT7</accession>
<feature type="chain" id="PRO_0000191957" description="UDP-3-O-acyl-N-acetylglucosamine deacetylase">
    <location>
        <begin position="1"/>
        <end position="306"/>
    </location>
</feature>
<feature type="active site" description="Proton donor" evidence="1">
    <location>
        <position position="265"/>
    </location>
</feature>
<feature type="binding site" evidence="1">
    <location>
        <position position="79"/>
    </location>
    <ligand>
        <name>Zn(2+)</name>
        <dbReference type="ChEBI" id="CHEBI:29105"/>
    </ligand>
</feature>
<feature type="binding site" evidence="1">
    <location>
        <position position="238"/>
    </location>
    <ligand>
        <name>Zn(2+)</name>
        <dbReference type="ChEBI" id="CHEBI:29105"/>
    </ligand>
</feature>
<feature type="binding site" evidence="1">
    <location>
        <position position="242"/>
    </location>
    <ligand>
        <name>Zn(2+)</name>
        <dbReference type="ChEBI" id="CHEBI:29105"/>
    </ligand>
</feature>
<gene>
    <name evidence="1" type="primary">lpxC</name>
    <name type="synonym">envA</name>
    <name type="ordered locus">SVI_4027</name>
</gene>
<evidence type="ECO:0000255" key="1">
    <source>
        <dbReference type="HAMAP-Rule" id="MF_00388"/>
    </source>
</evidence>
<dbReference type="EC" id="3.5.1.108" evidence="1"/>
<dbReference type="EMBL" id="AB052554">
    <property type="protein sequence ID" value="BAB19207.1"/>
    <property type="molecule type" value="Genomic_DNA"/>
</dbReference>
<dbReference type="EMBL" id="AP011177">
    <property type="protein sequence ID" value="BAJ03998.1"/>
    <property type="molecule type" value="Genomic_DNA"/>
</dbReference>
<dbReference type="RefSeq" id="WP_013053289.1">
    <property type="nucleotide sequence ID" value="NC_014012.1"/>
</dbReference>
<dbReference type="SMR" id="Q9EV47"/>
<dbReference type="STRING" id="637905.SVI_4027"/>
<dbReference type="KEGG" id="svo:SVI_4027"/>
<dbReference type="eggNOG" id="COG0774">
    <property type="taxonomic scope" value="Bacteria"/>
</dbReference>
<dbReference type="HOGENOM" id="CLU_046528_1_0_6"/>
<dbReference type="OrthoDB" id="9802746at2"/>
<dbReference type="UniPathway" id="UPA00359">
    <property type="reaction ID" value="UER00478"/>
</dbReference>
<dbReference type="Proteomes" id="UP000002350">
    <property type="component" value="Chromosome"/>
</dbReference>
<dbReference type="GO" id="GO:0016020">
    <property type="term" value="C:membrane"/>
    <property type="evidence" value="ECO:0007669"/>
    <property type="project" value="GOC"/>
</dbReference>
<dbReference type="GO" id="GO:0046872">
    <property type="term" value="F:metal ion binding"/>
    <property type="evidence" value="ECO:0007669"/>
    <property type="project" value="UniProtKB-KW"/>
</dbReference>
<dbReference type="GO" id="GO:0103117">
    <property type="term" value="F:UDP-3-O-acyl-N-acetylglucosamine deacetylase activity"/>
    <property type="evidence" value="ECO:0007669"/>
    <property type="project" value="UniProtKB-UniRule"/>
</dbReference>
<dbReference type="GO" id="GO:0009245">
    <property type="term" value="P:lipid A biosynthetic process"/>
    <property type="evidence" value="ECO:0007669"/>
    <property type="project" value="UniProtKB-UniRule"/>
</dbReference>
<dbReference type="Gene3D" id="3.30.230.20">
    <property type="entry name" value="lpxc deacetylase, domain 1"/>
    <property type="match status" value="1"/>
</dbReference>
<dbReference type="Gene3D" id="3.30.1700.10">
    <property type="entry name" value="lpxc deacetylase, domain 2"/>
    <property type="match status" value="1"/>
</dbReference>
<dbReference type="HAMAP" id="MF_00388">
    <property type="entry name" value="LpxC"/>
    <property type="match status" value="1"/>
</dbReference>
<dbReference type="InterPro" id="IPR020568">
    <property type="entry name" value="Ribosomal_Su5_D2-typ_SF"/>
</dbReference>
<dbReference type="InterPro" id="IPR004463">
    <property type="entry name" value="UDP-acyl_GlcNac_deAcase"/>
</dbReference>
<dbReference type="InterPro" id="IPR011334">
    <property type="entry name" value="UDP-acyl_GlcNac_deAcase_C"/>
</dbReference>
<dbReference type="InterPro" id="IPR015870">
    <property type="entry name" value="UDP-acyl_N-AcGlcN_deAcase_N"/>
</dbReference>
<dbReference type="NCBIfam" id="TIGR00325">
    <property type="entry name" value="lpxC"/>
    <property type="match status" value="1"/>
</dbReference>
<dbReference type="PANTHER" id="PTHR33694">
    <property type="entry name" value="UDP-3-O-ACYL-N-ACETYLGLUCOSAMINE DEACETYLASE 1, MITOCHONDRIAL-RELATED"/>
    <property type="match status" value="1"/>
</dbReference>
<dbReference type="PANTHER" id="PTHR33694:SF1">
    <property type="entry name" value="UDP-3-O-ACYL-N-ACETYLGLUCOSAMINE DEACETYLASE 1, MITOCHONDRIAL-RELATED"/>
    <property type="match status" value="1"/>
</dbReference>
<dbReference type="Pfam" id="PF03331">
    <property type="entry name" value="LpxC"/>
    <property type="match status" value="1"/>
</dbReference>
<dbReference type="SUPFAM" id="SSF54211">
    <property type="entry name" value="Ribosomal protein S5 domain 2-like"/>
    <property type="match status" value="2"/>
</dbReference>
<sequence length="306" mass="33927">MIFQRTVKEMVKTIGVGLHSGNKVTLSIKPAPVNSGIVLVRTDLEPAVSIPAKAELVRETTMCTALVNDDGIRISTIEHLFAALAGLGIDNAIIEVDAPEIPIMDGSASPFVFLLQSVGIQEQAAPKKYLRIKKNIRVEDGDKWVELKPYKGFKIDFTIDFEHPVIARSEQHMKMEFSSSAFIRDISRARTFGFMRDIEYLRANNLALGGSMENAVVLDEYKVLNPDGLRYEDEFVKHKILDAFGDLYVAGYAIVGEFCAYKTGHALNNRLVRALLAQQDAWELVSFETEREAPVSFSVPSGAVFA</sequence>
<keyword id="KW-0378">Hydrolase</keyword>
<keyword id="KW-0441">Lipid A biosynthesis</keyword>
<keyword id="KW-0444">Lipid biosynthesis</keyword>
<keyword id="KW-0443">Lipid metabolism</keyword>
<keyword id="KW-0479">Metal-binding</keyword>
<keyword id="KW-1185">Reference proteome</keyword>
<keyword id="KW-0862">Zinc</keyword>
<name>LPXC_SHEVD</name>